<sequence>MVFLKFFCMSFFCHLCQGYFDGPLYPEMSNGTLHHYFVPDGDYEENDDPEKCQLLFRVSDHRRCSQGEGSQVGSLLSLTLREEFTVLGRQVEDAGRVLEGISKSISYDLDGEESYGKYLRRESHQIGDAYSNSDKSLTELESKFKQGQEQDSRQESRLNEDFLGMLVHTRSLLKETLDISVGLRDKYELLALTIRSHGTRLGRLKNDYLKV</sequence>
<gene>
    <name type="primary">FIBIN</name>
    <name type="ORF">PSEC0235</name>
</gene>
<evidence type="ECO:0000250" key="1"/>
<evidence type="ECO:0000269" key="2">
    <source>
    </source>
</evidence>
<evidence type="ECO:0000305" key="3"/>
<accession>Q8TAL6</accession>
<protein>
    <recommendedName>
        <fullName>Fin bud initiation factor homolog</fullName>
    </recommendedName>
</protein>
<reference key="1">
    <citation type="journal article" date="2007" name="Dev. Biol.">
        <title>Fibin, a novel secreted lateral plate mesoderm signal, is essential for pectoral fin bud initiation in zebrafish.</title>
        <authorList>
            <person name="Wakahara T."/>
            <person name="Kusu N."/>
            <person name="Yamauchi H."/>
            <person name="Kimura I."/>
            <person name="Konishi M."/>
            <person name="Miyake A."/>
            <person name="Itoh N."/>
        </authorList>
    </citation>
    <scope>NUCLEOTIDE SEQUENCE [MRNA]</scope>
    <source>
        <tissue>Placenta</tissue>
    </source>
</reference>
<reference key="2">
    <citation type="journal article" date="2005" name="DNA Res.">
        <title>Signal sequence and keyword trap in silico for selection of full-length human cDNAs encoding secretion or membrane proteins from oligo-capped cDNA libraries.</title>
        <authorList>
            <person name="Otsuki T."/>
            <person name="Ota T."/>
            <person name="Nishikawa T."/>
            <person name="Hayashi K."/>
            <person name="Suzuki Y."/>
            <person name="Yamamoto J."/>
            <person name="Wakamatsu A."/>
            <person name="Kimura K."/>
            <person name="Sakamoto K."/>
            <person name="Hatano N."/>
            <person name="Kawai Y."/>
            <person name="Ishii S."/>
            <person name="Saito K."/>
            <person name="Kojima S."/>
            <person name="Sugiyama T."/>
            <person name="Ono T."/>
            <person name="Okano K."/>
            <person name="Yoshikawa Y."/>
            <person name="Aotsuka S."/>
            <person name="Sasaki N."/>
            <person name="Hattori A."/>
            <person name="Okumura K."/>
            <person name="Nagai K."/>
            <person name="Sugano S."/>
            <person name="Isogai T."/>
        </authorList>
    </citation>
    <scope>NUCLEOTIDE SEQUENCE [LARGE SCALE MRNA]</scope>
    <source>
        <tissue>Embryo</tissue>
    </source>
</reference>
<reference key="3">
    <citation type="submission" date="2005-09" db="EMBL/GenBank/DDBJ databases">
        <authorList>
            <person name="Mural R.J."/>
            <person name="Istrail S."/>
            <person name="Sutton G.G."/>
            <person name="Florea L."/>
            <person name="Halpern A.L."/>
            <person name="Mobarry C.M."/>
            <person name="Lippert R."/>
            <person name="Walenz B."/>
            <person name="Shatkay H."/>
            <person name="Dew I."/>
            <person name="Miller J.R."/>
            <person name="Flanigan M.J."/>
            <person name="Edwards N.J."/>
            <person name="Bolanos R."/>
            <person name="Fasulo D."/>
            <person name="Halldorsson B.V."/>
            <person name="Hannenhalli S."/>
            <person name="Turner R."/>
            <person name="Yooseph S."/>
            <person name="Lu F."/>
            <person name="Nusskern D.R."/>
            <person name="Shue B.C."/>
            <person name="Zheng X.H."/>
            <person name="Zhong F."/>
            <person name="Delcher A.L."/>
            <person name="Huson D.H."/>
            <person name="Kravitz S.A."/>
            <person name="Mouchard L."/>
            <person name="Reinert K."/>
            <person name="Remington K.A."/>
            <person name="Clark A.G."/>
            <person name="Waterman M.S."/>
            <person name="Eichler E.E."/>
            <person name="Adams M.D."/>
            <person name="Hunkapiller M.W."/>
            <person name="Myers E.W."/>
            <person name="Venter J.C."/>
        </authorList>
    </citation>
    <scope>NUCLEOTIDE SEQUENCE [LARGE SCALE GENOMIC DNA]</scope>
</reference>
<reference key="4">
    <citation type="journal article" date="2004" name="Genome Res.">
        <title>The status, quality, and expansion of the NIH full-length cDNA project: the Mammalian Gene Collection (MGC).</title>
        <authorList>
            <consortium name="The MGC Project Team"/>
        </authorList>
    </citation>
    <scope>NUCLEOTIDE SEQUENCE [LARGE SCALE MRNA]</scope>
    <source>
        <tissue>Brain</tissue>
    </source>
</reference>
<reference key="5">
    <citation type="journal article" date="2011" name="BMC Biochem.">
        <title>Characterization of the expression, promoter activity and molecular architecture of fibin.</title>
        <authorList>
            <person name="Lakner J."/>
            <person name="Seyer C."/>
            <person name="Hermsdorf T."/>
            <person name="Schoneberg T."/>
        </authorList>
    </citation>
    <scope>PROTEIN SEQUENCE OF 19-21</scope>
    <scope>SUBCELLULAR LOCATION</scope>
    <scope>GLYCOSYLATION AT ASN-30</scope>
    <scope>SUBUNIT</scope>
    <scope>DISULFIDE BONDS</scope>
</reference>
<name>FIBIN_HUMAN</name>
<organism>
    <name type="scientific">Homo sapiens</name>
    <name type="common">Human</name>
    <dbReference type="NCBI Taxonomy" id="9606"/>
    <lineage>
        <taxon>Eukaryota</taxon>
        <taxon>Metazoa</taxon>
        <taxon>Chordata</taxon>
        <taxon>Craniata</taxon>
        <taxon>Vertebrata</taxon>
        <taxon>Euteleostomi</taxon>
        <taxon>Mammalia</taxon>
        <taxon>Eutheria</taxon>
        <taxon>Euarchontoglires</taxon>
        <taxon>Primates</taxon>
        <taxon>Haplorrhini</taxon>
        <taxon>Catarrhini</taxon>
        <taxon>Hominidae</taxon>
        <taxon>Homo</taxon>
    </lineage>
</organism>
<feature type="signal peptide" evidence="2">
    <location>
        <begin position="1"/>
        <end position="18"/>
    </location>
</feature>
<feature type="chain" id="PRO_0000349211" description="Fin bud initiation factor homolog">
    <location>
        <begin position="19"/>
        <end position="211"/>
    </location>
</feature>
<feature type="glycosylation site" description="N-linked (GlcNAc...) asparagine" evidence="2">
    <location>
        <position position="30"/>
    </location>
</feature>
<feature type="disulfide bond" description="Interchain" evidence="2">
    <location>
        <position position="52"/>
    </location>
</feature>
<feature type="disulfide bond" description="Interchain" evidence="2">
    <location>
        <position position="64"/>
    </location>
</feature>
<dbReference type="EMBL" id="AB236892">
    <property type="protein sequence ID" value="BAF42654.1"/>
    <property type="molecule type" value="mRNA"/>
</dbReference>
<dbReference type="EMBL" id="AK075535">
    <property type="protein sequence ID" value="BAC11678.1"/>
    <property type="molecule type" value="mRNA"/>
</dbReference>
<dbReference type="EMBL" id="CH471064">
    <property type="protein sequence ID" value="EAW68292.1"/>
    <property type="molecule type" value="Genomic_DNA"/>
</dbReference>
<dbReference type="EMBL" id="BC026873">
    <property type="protein sequence ID" value="AAH26873.1"/>
    <property type="molecule type" value="mRNA"/>
</dbReference>
<dbReference type="CCDS" id="CCDS7861.1"/>
<dbReference type="RefSeq" id="NP_976249.1">
    <property type="nucleotide sequence ID" value="NM_203371.2"/>
</dbReference>
<dbReference type="BioGRID" id="132428">
    <property type="interactions" value="84"/>
</dbReference>
<dbReference type="FunCoup" id="Q8TAL6">
    <property type="interactions" value="2"/>
</dbReference>
<dbReference type="IntAct" id="Q8TAL6">
    <property type="interactions" value="68"/>
</dbReference>
<dbReference type="STRING" id="9606.ENSP00000321962"/>
<dbReference type="GlyCosmos" id="Q8TAL6">
    <property type="glycosylation" value="1 site, No reported glycans"/>
</dbReference>
<dbReference type="GlyGen" id="Q8TAL6">
    <property type="glycosylation" value="1 site"/>
</dbReference>
<dbReference type="iPTMnet" id="Q8TAL6"/>
<dbReference type="PhosphoSitePlus" id="Q8TAL6"/>
<dbReference type="BioMuta" id="FIBIN"/>
<dbReference type="DMDM" id="74730366"/>
<dbReference type="MassIVE" id="Q8TAL6"/>
<dbReference type="PaxDb" id="9606-ENSP00000321962"/>
<dbReference type="PeptideAtlas" id="Q8TAL6"/>
<dbReference type="ProteomicsDB" id="73891"/>
<dbReference type="Antibodypedia" id="25393">
    <property type="antibodies" value="59 antibodies from 17 providers"/>
</dbReference>
<dbReference type="DNASU" id="387758"/>
<dbReference type="Ensembl" id="ENST00000318627.4">
    <property type="protein sequence ID" value="ENSP00000321962.2"/>
    <property type="gene ID" value="ENSG00000176971.4"/>
</dbReference>
<dbReference type="GeneID" id="387758"/>
<dbReference type="KEGG" id="hsa:387758"/>
<dbReference type="MANE-Select" id="ENST00000318627.4">
    <property type="protein sequence ID" value="ENSP00000321962.2"/>
    <property type="RefSeq nucleotide sequence ID" value="NM_203371.2"/>
    <property type="RefSeq protein sequence ID" value="NP_976249.1"/>
</dbReference>
<dbReference type="UCSC" id="uc001mrd.4">
    <property type="organism name" value="human"/>
</dbReference>
<dbReference type="AGR" id="HGNC:33747"/>
<dbReference type="CTD" id="387758"/>
<dbReference type="DisGeNET" id="387758"/>
<dbReference type="GeneCards" id="FIBIN"/>
<dbReference type="HGNC" id="HGNC:33747">
    <property type="gene designation" value="FIBIN"/>
</dbReference>
<dbReference type="HPA" id="ENSG00000176971">
    <property type="expression patterns" value="Low tissue specificity"/>
</dbReference>
<dbReference type="neXtProt" id="NX_Q8TAL6"/>
<dbReference type="OpenTargets" id="ENSG00000176971"/>
<dbReference type="PharmGKB" id="PA164720070"/>
<dbReference type="VEuPathDB" id="HostDB:ENSG00000176971"/>
<dbReference type="eggNOG" id="ENOG502QSW0">
    <property type="taxonomic scope" value="Eukaryota"/>
</dbReference>
<dbReference type="GeneTree" id="ENSGT00390000007623"/>
<dbReference type="HOGENOM" id="CLU_1323584_0_0_1"/>
<dbReference type="InParanoid" id="Q8TAL6"/>
<dbReference type="OMA" id="CHGYFDG"/>
<dbReference type="OrthoDB" id="9434858at2759"/>
<dbReference type="PAN-GO" id="Q8TAL6">
    <property type="GO annotations" value="0 GO annotations based on evolutionary models"/>
</dbReference>
<dbReference type="PhylomeDB" id="Q8TAL6"/>
<dbReference type="TreeFam" id="TF331989"/>
<dbReference type="PathwayCommons" id="Q8TAL6"/>
<dbReference type="SignaLink" id="Q8TAL6"/>
<dbReference type="BioGRID-ORCS" id="387758">
    <property type="hits" value="9 hits in 1147 CRISPR screens"/>
</dbReference>
<dbReference type="ChiTaRS" id="FIBIN">
    <property type="organism name" value="human"/>
</dbReference>
<dbReference type="GenomeRNAi" id="387758"/>
<dbReference type="Pharos" id="Q8TAL6">
    <property type="development level" value="Tbio"/>
</dbReference>
<dbReference type="PRO" id="PR:Q8TAL6"/>
<dbReference type="Proteomes" id="UP000005640">
    <property type="component" value="Chromosome 11"/>
</dbReference>
<dbReference type="RNAct" id="Q8TAL6">
    <property type="molecule type" value="protein"/>
</dbReference>
<dbReference type="Bgee" id="ENSG00000176971">
    <property type="expression patterns" value="Expressed in calcaneal tendon and 167 other cell types or tissues"/>
</dbReference>
<dbReference type="GO" id="GO:0005783">
    <property type="term" value="C:endoplasmic reticulum"/>
    <property type="evidence" value="ECO:0007669"/>
    <property type="project" value="UniProtKB-SubCell"/>
</dbReference>
<dbReference type="GO" id="GO:0005576">
    <property type="term" value="C:extracellular region"/>
    <property type="evidence" value="ECO:0007669"/>
    <property type="project" value="UniProtKB-SubCell"/>
</dbReference>
<dbReference type="GO" id="GO:0005794">
    <property type="term" value="C:Golgi apparatus"/>
    <property type="evidence" value="ECO:0007669"/>
    <property type="project" value="UniProtKB-SubCell"/>
</dbReference>
<dbReference type="GO" id="GO:0042803">
    <property type="term" value="F:protein homodimerization activity"/>
    <property type="evidence" value="ECO:0007669"/>
    <property type="project" value="Ensembl"/>
</dbReference>
<dbReference type="InterPro" id="IPR026772">
    <property type="entry name" value="Fibin"/>
</dbReference>
<dbReference type="PANTHER" id="PTHR31185">
    <property type="entry name" value="FIN BUD INITIATION FACTOR FIBIN"/>
    <property type="match status" value="1"/>
</dbReference>
<dbReference type="PANTHER" id="PTHR31185:SF0">
    <property type="entry name" value="FIN BUD INITIATION FACTOR HOMOLOG"/>
    <property type="match status" value="1"/>
</dbReference>
<dbReference type="Pfam" id="PF15819">
    <property type="entry name" value="Fibin"/>
    <property type="match status" value="1"/>
</dbReference>
<proteinExistence type="evidence at protein level"/>
<keyword id="KW-0903">Direct protein sequencing</keyword>
<keyword id="KW-1015">Disulfide bond</keyword>
<keyword id="KW-0256">Endoplasmic reticulum</keyword>
<keyword id="KW-0325">Glycoprotein</keyword>
<keyword id="KW-0333">Golgi apparatus</keyword>
<keyword id="KW-1267">Proteomics identification</keyword>
<keyword id="KW-1185">Reference proteome</keyword>
<keyword id="KW-0964">Secreted</keyword>
<keyword id="KW-0732">Signal</keyword>
<comment type="subunit">
    <text evidence="2">Homodimer; disulfide-linked. Seems to also exist as monomers.</text>
</comment>
<comment type="subcellular location">
    <subcellularLocation>
        <location evidence="1">Secreted</location>
    </subcellularLocation>
    <subcellularLocation>
        <location evidence="1">Golgi apparatus</location>
    </subcellularLocation>
    <subcellularLocation>
        <location evidence="2">Endoplasmic reticulum</location>
    </subcellularLocation>
</comment>
<comment type="similarity">
    <text evidence="3">Belongs to the FIBIN family.</text>
</comment>